<evidence type="ECO:0000250" key="1">
    <source>
        <dbReference type="UniProtKB" id="Q9BWJ5"/>
    </source>
</evidence>
<evidence type="ECO:0000305" key="2"/>
<name>SF3B5_MOUSE</name>
<organism>
    <name type="scientific">Mus musculus</name>
    <name type="common">Mouse</name>
    <dbReference type="NCBI Taxonomy" id="10090"/>
    <lineage>
        <taxon>Eukaryota</taxon>
        <taxon>Metazoa</taxon>
        <taxon>Chordata</taxon>
        <taxon>Craniata</taxon>
        <taxon>Vertebrata</taxon>
        <taxon>Euteleostomi</taxon>
        <taxon>Mammalia</taxon>
        <taxon>Eutheria</taxon>
        <taxon>Euarchontoglires</taxon>
        <taxon>Glires</taxon>
        <taxon>Rodentia</taxon>
        <taxon>Myomorpha</taxon>
        <taxon>Muroidea</taxon>
        <taxon>Muridae</taxon>
        <taxon>Murinae</taxon>
        <taxon>Mus</taxon>
        <taxon>Mus</taxon>
    </lineage>
</organism>
<sequence length="86" mass="10119">MTDRYTIHSQLEHLQSKYIGTGHADTTKWEWLVNQHRDSYCSYMGHFDLLNYFAIAENESKARVRFNLMEKMLQPSGPPADKPEEN</sequence>
<proteinExistence type="evidence at protein level"/>
<comment type="function">
    <text evidence="1">Component of the 17S U2 SnRNP complex of the spliceosome, a large ribonucleoprotein complex that removes introns from transcribed pre-mRNAs. The 17S U2 SnRNP complex (1) directly participates in early spliceosome assembly and (2) mediates recognition of the intron branch site during pre-mRNA splicing by promoting the selection of the pre-mRNA branch-site adenosine, the nucleophile for the first step of splicing. Within the 17S U2 SnRNP complex, SF3B4 is part of the SF3B subcomplex, which is required for 'A' complex assembly formed by the stable binding of U2 snRNP to the branchpoint sequence in pre-mRNA. Sequence independent binding of SF3A and SF3B subcomplexes upstream of the branch site is essential, it may anchor U2 snRNP to the pre-mRNA. Also acts as a component of the minor spliceosome, which is involved in the splicing of U12-type introns in pre-mRNAs.</text>
</comment>
<comment type="subunit">
    <text evidence="1">Component of the 17S U2 SnRNP complex, a ribonucleoprotein complex that contains small nuclear RNA (snRNA) U2 and a number of specific proteins. Part of the SF3B subcomplex of the 17S U2 SnRNP complex. SF3B associates with the splicing subcomplex SF3A and a 12S RNA unit to form the U2 small nuclear ribonucleoproteins complex (U2 snRNP). Within the SF3B subcomplex, interacts directly with SF3B1 (via HEAT domain) and SF3B3. Component of the minor spliceosome, which splices U12-type introns.</text>
</comment>
<comment type="subcellular location">
    <subcellularLocation>
        <location evidence="1">Nucleus</location>
    </subcellularLocation>
</comment>
<comment type="similarity">
    <text evidence="2">Belongs to the SF3B5 family.</text>
</comment>
<accession>Q923D4</accession>
<protein>
    <recommendedName>
        <fullName>Splicing factor 3B subunit 5</fullName>
        <shortName>SF3b5</shortName>
    </recommendedName>
    <alternativeName>
        <fullName>Pre-mRNA-splicing factor SF3b 10 kDa subunit</fullName>
    </alternativeName>
</protein>
<reference key="1">
    <citation type="journal article" date="2005" name="Science">
        <title>The transcriptional landscape of the mammalian genome.</title>
        <authorList>
            <person name="Carninci P."/>
            <person name="Kasukawa T."/>
            <person name="Katayama S."/>
            <person name="Gough J."/>
            <person name="Frith M.C."/>
            <person name="Maeda N."/>
            <person name="Oyama R."/>
            <person name="Ravasi T."/>
            <person name="Lenhard B."/>
            <person name="Wells C."/>
            <person name="Kodzius R."/>
            <person name="Shimokawa K."/>
            <person name="Bajic V.B."/>
            <person name="Brenner S.E."/>
            <person name="Batalov S."/>
            <person name="Forrest A.R."/>
            <person name="Zavolan M."/>
            <person name="Davis M.J."/>
            <person name="Wilming L.G."/>
            <person name="Aidinis V."/>
            <person name="Allen J.E."/>
            <person name="Ambesi-Impiombato A."/>
            <person name="Apweiler R."/>
            <person name="Aturaliya R.N."/>
            <person name="Bailey T.L."/>
            <person name="Bansal M."/>
            <person name="Baxter L."/>
            <person name="Beisel K.W."/>
            <person name="Bersano T."/>
            <person name="Bono H."/>
            <person name="Chalk A.M."/>
            <person name="Chiu K.P."/>
            <person name="Choudhary V."/>
            <person name="Christoffels A."/>
            <person name="Clutterbuck D.R."/>
            <person name="Crowe M.L."/>
            <person name="Dalla E."/>
            <person name="Dalrymple B.P."/>
            <person name="de Bono B."/>
            <person name="Della Gatta G."/>
            <person name="di Bernardo D."/>
            <person name="Down T."/>
            <person name="Engstrom P."/>
            <person name="Fagiolini M."/>
            <person name="Faulkner G."/>
            <person name="Fletcher C.F."/>
            <person name="Fukushima T."/>
            <person name="Furuno M."/>
            <person name="Futaki S."/>
            <person name="Gariboldi M."/>
            <person name="Georgii-Hemming P."/>
            <person name="Gingeras T.R."/>
            <person name="Gojobori T."/>
            <person name="Green R.E."/>
            <person name="Gustincich S."/>
            <person name="Harbers M."/>
            <person name="Hayashi Y."/>
            <person name="Hensch T.K."/>
            <person name="Hirokawa N."/>
            <person name="Hill D."/>
            <person name="Huminiecki L."/>
            <person name="Iacono M."/>
            <person name="Ikeo K."/>
            <person name="Iwama A."/>
            <person name="Ishikawa T."/>
            <person name="Jakt M."/>
            <person name="Kanapin A."/>
            <person name="Katoh M."/>
            <person name="Kawasawa Y."/>
            <person name="Kelso J."/>
            <person name="Kitamura H."/>
            <person name="Kitano H."/>
            <person name="Kollias G."/>
            <person name="Krishnan S.P."/>
            <person name="Kruger A."/>
            <person name="Kummerfeld S.K."/>
            <person name="Kurochkin I.V."/>
            <person name="Lareau L.F."/>
            <person name="Lazarevic D."/>
            <person name="Lipovich L."/>
            <person name="Liu J."/>
            <person name="Liuni S."/>
            <person name="McWilliam S."/>
            <person name="Madan Babu M."/>
            <person name="Madera M."/>
            <person name="Marchionni L."/>
            <person name="Matsuda H."/>
            <person name="Matsuzawa S."/>
            <person name="Miki H."/>
            <person name="Mignone F."/>
            <person name="Miyake S."/>
            <person name="Morris K."/>
            <person name="Mottagui-Tabar S."/>
            <person name="Mulder N."/>
            <person name="Nakano N."/>
            <person name="Nakauchi H."/>
            <person name="Ng P."/>
            <person name="Nilsson R."/>
            <person name="Nishiguchi S."/>
            <person name="Nishikawa S."/>
            <person name="Nori F."/>
            <person name="Ohara O."/>
            <person name="Okazaki Y."/>
            <person name="Orlando V."/>
            <person name="Pang K.C."/>
            <person name="Pavan W.J."/>
            <person name="Pavesi G."/>
            <person name="Pesole G."/>
            <person name="Petrovsky N."/>
            <person name="Piazza S."/>
            <person name="Reed J."/>
            <person name="Reid J.F."/>
            <person name="Ring B.Z."/>
            <person name="Ringwald M."/>
            <person name="Rost B."/>
            <person name="Ruan Y."/>
            <person name="Salzberg S.L."/>
            <person name="Sandelin A."/>
            <person name="Schneider C."/>
            <person name="Schoenbach C."/>
            <person name="Sekiguchi K."/>
            <person name="Semple C.A."/>
            <person name="Seno S."/>
            <person name="Sessa L."/>
            <person name="Sheng Y."/>
            <person name="Shibata Y."/>
            <person name="Shimada H."/>
            <person name="Shimada K."/>
            <person name="Silva D."/>
            <person name="Sinclair B."/>
            <person name="Sperling S."/>
            <person name="Stupka E."/>
            <person name="Sugiura K."/>
            <person name="Sultana R."/>
            <person name="Takenaka Y."/>
            <person name="Taki K."/>
            <person name="Tammoja K."/>
            <person name="Tan S.L."/>
            <person name="Tang S."/>
            <person name="Taylor M.S."/>
            <person name="Tegner J."/>
            <person name="Teichmann S.A."/>
            <person name="Ueda H.R."/>
            <person name="van Nimwegen E."/>
            <person name="Verardo R."/>
            <person name="Wei C.L."/>
            <person name="Yagi K."/>
            <person name="Yamanishi H."/>
            <person name="Zabarovsky E."/>
            <person name="Zhu S."/>
            <person name="Zimmer A."/>
            <person name="Hide W."/>
            <person name="Bult C."/>
            <person name="Grimmond S.M."/>
            <person name="Teasdale R.D."/>
            <person name="Liu E.T."/>
            <person name="Brusic V."/>
            <person name="Quackenbush J."/>
            <person name="Wahlestedt C."/>
            <person name="Mattick J.S."/>
            <person name="Hume D.A."/>
            <person name="Kai C."/>
            <person name="Sasaki D."/>
            <person name="Tomaru Y."/>
            <person name="Fukuda S."/>
            <person name="Kanamori-Katayama M."/>
            <person name="Suzuki M."/>
            <person name="Aoki J."/>
            <person name="Arakawa T."/>
            <person name="Iida J."/>
            <person name="Imamura K."/>
            <person name="Itoh M."/>
            <person name="Kato T."/>
            <person name="Kawaji H."/>
            <person name="Kawagashira N."/>
            <person name="Kawashima T."/>
            <person name="Kojima M."/>
            <person name="Kondo S."/>
            <person name="Konno H."/>
            <person name="Nakano K."/>
            <person name="Ninomiya N."/>
            <person name="Nishio T."/>
            <person name="Okada M."/>
            <person name="Plessy C."/>
            <person name="Shibata K."/>
            <person name="Shiraki T."/>
            <person name="Suzuki S."/>
            <person name="Tagami M."/>
            <person name="Waki K."/>
            <person name="Watahiki A."/>
            <person name="Okamura-Oho Y."/>
            <person name="Suzuki H."/>
            <person name="Kawai J."/>
            <person name="Hayashizaki Y."/>
        </authorList>
    </citation>
    <scope>NUCLEOTIDE SEQUENCE [LARGE SCALE MRNA]</scope>
    <source>
        <strain>C57BL/6J</strain>
    </source>
</reference>
<reference key="2">
    <citation type="journal article" date="2004" name="Genome Res.">
        <title>The status, quality, and expansion of the NIH full-length cDNA project: the Mammalian Gene Collection (MGC).</title>
        <authorList>
            <consortium name="The MGC Project Team"/>
        </authorList>
    </citation>
    <scope>NUCLEOTIDE SEQUENCE [LARGE SCALE MRNA]</scope>
</reference>
<reference key="3">
    <citation type="journal article" date="2010" name="Cell">
        <title>A tissue-specific atlas of mouse protein phosphorylation and expression.</title>
        <authorList>
            <person name="Huttlin E.L."/>
            <person name="Jedrychowski M.P."/>
            <person name="Elias J.E."/>
            <person name="Goswami T."/>
            <person name="Rad R."/>
            <person name="Beausoleil S.A."/>
            <person name="Villen J."/>
            <person name="Haas W."/>
            <person name="Sowa M.E."/>
            <person name="Gygi S.P."/>
        </authorList>
    </citation>
    <scope>IDENTIFICATION BY MASS SPECTROMETRY [LARGE SCALE ANALYSIS]</scope>
    <source>
        <tissue>Brain</tissue>
        <tissue>Kidney</tissue>
        <tissue>Liver</tissue>
        <tissue>Lung</tissue>
        <tissue>Spleen</tissue>
        <tissue>Testis</tissue>
    </source>
</reference>
<keyword id="KW-0007">Acetylation</keyword>
<keyword id="KW-0507">mRNA processing</keyword>
<keyword id="KW-0508">mRNA splicing</keyword>
<keyword id="KW-0539">Nucleus</keyword>
<keyword id="KW-0597">Phosphoprotein</keyword>
<keyword id="KW-1185">Reference proteome</keyword>
<keyword id="KW-0694">RNA-binding</keyword>
<keyword id="KW-0747">Spliceosome</keyword>
<dbReference type="EMBL" id="AK003475">
    <property type="protein sequence ID" value="BAC25037.1"/>
    <property type="molecule type" value="mRNA"/>
</dbReference>
<dbReference type="EMBL" id="AK009874">
    <property type="protein sequence ID" value="BAC25275.1"/>
    <property type="molecule type" value="mRNA"/>
</dbReference>
<dbReference type="EMBL" id="BC006603">
    <property type="protein sequence ID" value="AAH06603.1"/>
    <property type="molecule type" value="mRNA"/>
</dbReference>
<dbReference type="CCDS" id="CCDS35843.1"/>
<dbReference type="RefSeq" id="NP_780311.2">
    <property type="nucleotide sequence ID" value="NM_175102.4"/>
</dbReference>
<dbReference type="SMR" id="Q923D4"/>
<dbReference type="BioGRID" id="211233">
    <property type="interactions" value="12"/>
</dbReference>
<dbReference type="ComplexPortal" id="CPX-6803">
    <property type="entry name" value="SAGA complex, KAT2B variant"/>
</dbReference>
<dbReference type="ComplexPortal" id="CPX-920">
    <property type="entry name" value="SAGA complex, KAT2A variant"/>
</dbReference>
<dbReference type="FunCoup" id="Q923D4">
    <property type="interactions" value="1611"/>
</dbReference>
<dbReference type="IntAct" id="Q923D4">
    <property type="interactions" value="3"/>
</dbReference>
<dbReference type="STRING" id="10090.ENSMUSP00000100771"/>
<dbReference type="iPTMnet" id="Q923D4"/>
<dbReference type="PhosphoSitePlus" id="Q923D4"/>
<dbReference type="SwissPalm" id="Q923D4"/>
<dbReference type="CPTAC" id="non-CPTAC-3876"/>
<dbReference type="jPOST" id="Q923D4"/>
<dbReference type="PaxDb" id="10090-ENSMUSP00000100771"/>
<dbReference type="PeptideAtlas" id="Q923D4"/>
<dbReference type="ProteomicsDB" id="261507"/>
<dbReference type="Pumba" id="Q923D4"/>
<dbReference type="Antibodypedia" id="46681">
    <property type="antibodies" value="47 antibodies from 19 providers"/>
</dbReference>
<dbReference type="DNASU" id="66125"/>
<dbReference type="Ensembl" id="ENSMUST00000105139.5">
    <property type="protein sequence ID" value="ENSMUSP00000100771.4"/>
    <property type="gene ID" value="ENSMUSG00000078348.5"/>
</dbReference>
<dbReference type="GeneID" id="66125"/>
<dbReference type="KEGG" id="mmu:66125"/>
<dbReference type="UCSC" id="uc007eki.2">
    <property type="organism name" value="mouse"/>
</dbReference>
<dbReference type="AGR" id="MGI:1913375"/>
<dbReference type="CTD" id="83443"/>
<dbReference type="MGI" id="MGI:1913375">
    <property type="gene designation" value="Sf3b5"/>
</dbReference>
<dbReference type="VEuPathDB" id="HostDB:ENSMUSG00000078348"/>
<dbReference type="eggNOG" id="KOG3485">
    <property type="taxonomic scope" value="Eukaryota"/>
</dbReference>
<dbReference type="GeneTree" id="ENSGT00390000013215"/>
<dbReference type="HOGENOM" id="CLU_138804_3_1_1"/>
<dbReference type="InParanoid" id="Q923D4"/>
<dbReference type="OMA" id="YDRFNIH"/>
<dbReference type="OrthoDB" id="159at9989"/>
<dbReference type="PhylomeDB" id="Q923D4"/>
<dbReference type="TreeFam" id="TF300117"/>
<dbReference type="Reactome" id="R-MMU-72163">
    <property type="pathway name" value="mRNA Splicing - Major Pathway"/>
</dbReference>
<dbReference type="Reactome" id="R-MMU-72165">
    <property type="pathway name" value="mRNA Splicing - Minor Pathway"/>
</dbReference>
<dbReference type="BioGRID-ORCS" id="66125">
    <property type="hits" value="23 hits in 75 CRISPR screens"/>
</dbReference>
<dbReference type="ChiTaRS" id="Sf3b5">
    <property type="organism name" value="mouse"/>
</dbReference>
<dbReference type="PRO" id="PR:Q923D4"/>
<dbReference type="Proteomes" id="UP000000589">
    <property type="component" value="Chromosome 10"/>
</dbReference>
<dbReference type="RNAct" id="Q923D4">
    <property type="molecule type" value="protein"/>
</dbReference>
<dbReference type="Bgee" id="ENSMUSG00000078348">
    <property type="expression patterns" value="Expressed in internal carotid artery and 261 other cell types or tissues"/>
</dbReference>
<dbReference type="GO" id="GO:0005654">
    <property type="term" value="C:nucleoplasm"/>
    <property type="evidence" value="ECO:0007669"/>
    <property type="project" value="Ensembl"/>
</dbReference>
<dbReference type="GO" id="GO:0005634">
    <property type="term" value="C:nucleus"/>
    <property type="evidence" value="ECO:0000250"/>
    <property type="project" value="UniProtKB"/>
</dbReference>
<dbReference type="GO" id="GO:0000124">
    <property type="term" value="C:SAGA complex"/>
    <property type="evidence" value="ECO:0000303"/>
    <property type="project" value="ComplexPortal"/>
</dbReference>
<dbReference type="GO" id="GO:0005689">
    <property type="term" value="C:U12-type spliceosomal complex"/>
    <property type="evidence" value="ECO:0007669"/>
    <property type="project" value="Ensembl"/>
</dbReference>
<dbReference type="GO" id="GO:0071005">
    <property type="term" value="C:U2-type precatalytic spliceosome"/>
    <property type="evidence" value="ECO:0000250"/>
    <property type="project" value="UniProtKB"/>
</dbReference>
<dbReference type="GO" id="GO:0005684">
    <property type="term" value="C:U2-type spliceosomal complex"/>
    <property type="evidence" value="ECO:0000250"/>
    <property type="project" value="UniProtKB"/>
</dbReference>
<dbReference type="GO" id="GO:0003723">
    <property type="term" value="F:RNA binding"/>
    <property type="evidence" value="ECO:0007669"/>
    <property type="project" value="UniProtKB-KW"/>
</dbReference>
<dbReference type="GO" id="GO:1990935">
    <property type="term" value="F:splicing factor binding"/>
    <property type="evidence" value="ECO:0007669"/>
    <property type="project" value="Ensembl"/>
</dbReference>
<dbReference type="GO" id="GO:0000398">
    <property type="term" value="P:mRNA splicing, via spliceosome"/>
    <property type="evidence" value="ECO:0000250"/>
    <property type="project" value="UniProtKB"/>
</dbReference>
<dbReference type="GO" id="GO:0045893">
    <property type="term" value="P:positive regulation of DNA-templated transcription"/>
    <property type="evidence" value="ECO:0000303"/>
    <property type="project" value="ComplexPortal"/>
</dbReference>
<dbReference type="GO" id="GO:0006282">
    <property type="term" value="P:regulation of DNA repair"/>
    <property type="evidence" value="ECO:0000303"/>
    <property type="project" value="ComplexPortal"/>
</dbReference>
<dbReference type="GO" id="GO:0043484">
    <property type="term" value="P:regulation of RNA splicing"/>
    <property type="evidence" value="ECO:0000303"/>
    <property type="project" value="ComplexPortal"/>
</dbReference>
<dbReference type="InterPro" id="IPR009846">
    <property type="entry name" value="SF3b5/RDS3-10"/>
</dbReference>
<dbReference type="InterPro" id="IPR017089">
    <property type="entry name" value="Splicing_factor_3B_subunit_5"/>
</dbReference>
<dbReference type="PANTHER" id="PTHR20978">
    <property type="entry name" value="SPLICING FACTOR 3B SUBUNIT 5"/>
    <property type="match status" value="1"/>
</dbReference>
<dbReference type="PANTHER" id="PTHR20978:SF0">
    <property type="entry name" value="SPLICING FACTOR 3B SUBUNIT 5"/>
    <property type="match status" value="1"/>
</dbReference>
<dbReference type="Pfam" id="PF07189">
    <property type="entry name" value="SF3b10"/>
    <property type="match status" value="1"/>
</dbReference>
<dbReference type="PIRSF" id="PIRSF037010">
    <property type="entry name" value="Splicing_factor_3B_subunit_5"/>
    <property type="match status" value="1"/>
</dbReference>
<feature type="initiator methionine" description="Removed" evidence="1">
    <location>
        <position position="1"/>
    </location>
</feature>
<feature type="chain" id="PRO_0000220758" description="Splicing factor 3B subunit 5">
    <location>
        <begin position="2"/>
        <end position="86"/>
    </location>
</feature>
<feature type="region of interest" description="Interaction with SF3B1 and SF3B3" evidence="1">
    <location>
        <begin position="15"/>
        <end position="76"/>
    </location>
</feature>
<feature type="site" description="Interaction with RNA" evidence="1">
    <location>
        <position position="5"/>
    </location>
</feature>
<feature type="site" description="Interaction with RNA" evidence="1">
    <location>
        <position position="20"/>
    </location>
</feature>
<feature type="modified residue" description="N-acetylthreonine" evidence="1">
    <location>
        <position position="2"/>
    </location>
</feature>
<feature type="modified residue" description="Phosphoserine" evidence="1">
    <location>
        <position position="9"/>
    </location>
</feature>
<feature type="modified residue" description="N6-acetyllysine" evidence="1">
    <location>
        <position position="17"/>
    </location>
</feature>
<gene>
    <name type="primary">Sf3b5</name>
    <name type="synonym">Sf3b10</name>
</gene>